<evidence type="ECO:0000255" key="1">
    <source>
        <dbReference type="HAMAP-Rule" id="MF_00099"/>
    </source>
</evidence>
<feature type="chain" id="PRO_0000264294" description="Protein-glutamate methylesterase/protein-glutamine glutaminase 3">
    <location>
        <begin position="1"/>
        <end position="355"/>
    </location>
</feature>
<feature type="domain" description="Response regulatory" evidence="1">
    <location>
        <begin position="8"/>
        <end position="126"/>
    </location>
</feature>
<feature type="domain" description="CheB-type methylesterase" evidence="1">
    <location>
        <begin position="152"/>
        <end position="337"/>
    </location>
</feature>
<feature type="active site" evidence="1">
    <location>
        <position position="166"/>
    </location>
</feature>
<feature type="active site" evidence="1">
    <location>
        <position position="193"/>
    </location>
</feature>
<feature type="active site" evidence="1">
    <location>
        <position position="284"/>
    </location>
</feature>
<feature type="modified residue" description="4-aspartylphosphate" evidence="1">
    <location>
        <position position="59"/>
    </location>
</feature>
<accession>Q1CZL0</accession>
<comment type="function">
    <text evidence="1">Involved in chemotaxis. Part of a chemotaxis signal transduction system that modulates chemotaxis in response to various stimuli. Catalyzes the demethylation of specific methylglutamate residues introduced into the chemoreceptors (methyl-accepting chemotaxis proteins or MCP) by CheR. Also mediates the irreversible deamidation of specific glutamine residues to glutamic acid.</text>
</comment>
<comment type="catalytic activity">
    <reaction evidence="1">
        <text>[protein]-L-glutamate 5-O-methyl ester + H2O = L-glutamyl-[protein] + methanol + H(+)</text>
        <dbReference type="Rhea" id="RHEA:23236"/>
        <dbReference type="Rhea" id="RHEA-COMP:10208"/>
        <dbReference type="Rhea" id="RHEA-COMP:10311"/>
        <dbReference type="ChEBI" id="CHEBI:15377"/>
        <dbReference type="ChEBI" id="CHEBI:15378"/>
        <dbReference type="ChEBI" id="CHEBI:17790"/>
        <dbReference type="ChEBI" id="CHEBI:29973"/>
        <dbReference type="ChEBI" id="CHEBI:82795"/>
        <dbReference type="EC" id="3.1.1.61"/>
    </reaction>
</comment>
<comment type="catalytic activity">
    <reaction evidence="1">
        <text>L-glutaminyl-[protein] + H2O = L-glutamyl-[protein] + NH4(+)</text>
        <dbReference type="Rhea" id="RHEA:16441"/>
        <dbReference type="Rhea" id="RHEA-COMP:10207"/>
        <dbReference type="Rhea" id="RHEA-COMP:10208"/>
        <dbReference type="ChEBI" id="CHEBI:15377"/>
        <dbReference type="ChEBI" id="CHEBI:28938"/>
        <dbReference type="ChEBI" id="CHEBI:29973"/>
        <dbReference type="ChEBI" id="CHEBI:30011"/>
        <dbReference type="EC" id="3.5.1.44"/>
    </reaction>
</comment>
<comment type="subcellular location">
    <subcellularLocation>
        <location evidence="1">Cytoplasm</location>
    </subcellularLocation>
</comment>
<comment type="domain">
    <text evidence="1">Contains a C-terminal catalytic domain, and an N-terminal region which modulates catalytic activity.</text>
</comment>
<comment type="PTM">
    <text evidence="1">Phosphorylated by CheA. Phosphorylation of the N-terminal regulatory domain activates the methylesterase activity.</text>
</comment>
<comment type="similarity">
    <text evidence="1">Belongs to the CheB family.</text>
</comment>
<keyword id="KW-0145">Chemotaxis</keyword>
<keyword id="KW-0963">Cytoplasm</keyword>
<keyword id="KW-0378">Hydrolase</keyword>
<keyword id="KW-0597">Phosphoprotein</keyword>
<keyword id="KW-1185">Reference proteome</keyword>
<organism>
    <name type="scientific">Myxococcus xanthus (strain DK1622)</name>
    <dbReference type="NCBI Taxonomy" id="246197"/>
    <lineage>
        <taxon>Bacteria</taxon>
        <taxon>Pseudomonadati</taxon>
        <taxon>Myxococcota</taxon>
        <taxon>Myxococcia</taxon>
        <taxon>Myxococcales</taxon>
        <taxon>Cystobacterineae</taxon>
        <taxon>Myxococcaceae</taxon>
        <taxon>Myxococcus</taxon>
    </lineage>
</organism>
<sequence>MSVQRPIRVLVVDDSPTMANMLTALLTEEPRIEVVGRAGDGNRAVQLARLLRPDVITMDLLLPGLDGPGAIAAIMSQSPARILVVSAVAEQRGVDLGFQAMSAGALELIGKPNVTNAEELRRWGKELAHSVCLMAEVPVISRRPRAATAPPPPTGARVDIFGVVASTGGPPALADVLSKLPRSLPVPLLIAQHITVGFTQGMVRWLSQVTPLPVSIAKDGERLEPGRVYFPLDGHDLLVDAAGLARLQPSQGGPCPSGDVMLTSLAAAFGRRSGGVVLTGMGEDGARGLLAIRRAGGVTFSQDEASSVVFGMPRAALDVKATDQGVPLASMPELILQSCTFAPFRGGRPEGGPTR</sequence>
<name>CHEB3_MYXXD</name>
<proteinExistence type="inferred from homology"/>
<gene>
    <name evidence="1" type="primary">cheB3</name>
    <name type="ordered locus">MXAN_6028</name>
</gene>
<reference key="1">
    <citation type="journal article" date="2006" name="Proc. Natl. Acad. Sci. U.S.A.">
        <title>Evolution of sensory complexity recorded in a myxobacterial genome.</title>
        <authorList>
            <person name="Goldman B.S."/>
            <person name="Nierman W.C."/>
            <person name="Kaiser D."/>
            <person name="Slater S.C."/>
            <person name="Durkin A.S."/>
            <person name="Eisen J.A."/>
            <person name="Ronning C.M."/>
            <person name="Barbazuk W.B."/>
            <person name="Blanchard M."/>
            <person name="Field C."/>
            <person name="Halling C."/>
            <person name="Hinkle G."/>
            <person name="Iartchuk O."/>
            <person name="Kim H.S."/>
            <person name="Mackenzie C."/>
            <person name="Madupu R."/>
            <person name="Miller N."/>
            <person name="Shvartsbeyn A."/>
            <person name="Sullivan S.A."/>
            <person name="Vaudin M."/>
            <person name="Wiegand R."/>
            <person name="Kaplan H.B."/>
        </authorList>
    </citation>
    <scope>NUCLEOTIDE SEQUENCE [LARGE SCALE GENOMIC DNA]</scope>
    <source>
        <strain>DK1622</strain>
    </source>
</reference>
<dbReference type="EC" id="3.1.1.61" evidence="1"/>
<dbReference type="EC" id="3.5.1.44" evidence="1"/>
<dbReference type="EMBL" id="CP000113">
    <property type="protein sequence ID" value="ABF91242.1"/>
    <property type="molecule type" value="Genomic_DNA"/>
</dbReference>
<dbReference type="RefSeq" id="WP_011555977.1">
    <property type="nucleotide sequence ID" value="NC_008095.1"/>
</dbReference>
<dbReference type="SMR" id="Q1CZL0"/>
<dbReference type="STRING" id="246197.MXAN_6028"/>
<dbReference type="EnsemblBacteria" id="ABF91242">
    <property type="protein sequence ID" value="ABF91242"/>
    <property type="gene ID" value="MXAN_6028"/>
</dbReference>
<dbReference type="GeneID" id="41363266"/>
<dbReference type="KEGG" id="mxa:MXAN_6028"/>
<dbReference type="eggNOG" id="COG2201">
    <property type="taxonomic scope" value="Bacteria"/>
</dbReference>
<dbReference type="HOGENOM" id="CLU_000445_51_0_7"/>
<dbReference type="OrthoDB" id="5490992at2"/>
<dbReference type="Proteomes" id="UP000002402">
    <property type="component" value="Chromosome"/>
</dbReference>
<dbReference type="GO" id="GO:0005737">
    <property type="term" value="C:cytoplasm"/>
    <property type="evidence" value="ECO:0007669"/>
    <property type="project" value="UniProtKB-SubCell"/>
</dbReference>
<dbReference type="GO" id="GO:0000156">
    <property type="term" value="F:phosphorelay response regulator activity"/>
    <property type="evidence" value="ECO:0007669"/>
    <property type="project" value="InterPro"/>
</dbReference>
<dbReference type="GO" id="GO:0008984">
    <property type="term" value="F:protein-glutamate methylesterase activity"/>
    <property type="evidence" value="ECO:0007669"/>
    <property type="project" value="UniProtKB-UniRule"/>
</dbReference>
<dbReference type="GO" id="GO:0050568">
    <property type="term" value="F:protein-glutamine glutaminase activity"/>
    <property type="evidence" value="ECO:0007669"/>
    <property type="project" value="UniProtKB-UniRule"/>
</dbReference>
<dbReference type="GO" id="GO:0006935">
    <property type="term" value="P:chemotaxis"/>
    <property type="evidence" value="ECO:0007669"/>
    <property type="project" value="UniProtKB-UniRule"/>
</dbReference>
<dbReference type="CDD" id="cd16432">
    <property type="entry name" value="CheB_Rec"/>
    <property type="match status" value="1"/>
</dbReference>
<dbReference type="CDD" id="cd17541">
    <property type="entry name" value="REC_CheB-like"/>
    <property type="match status" value="1"/>
</dbReference>
<dbReference type="Gene3D" id="3.40.50.2300">
    <property type="match status" value="1"/>
</dbReference>
<dbReference type="Gene3D" id="3.40.50.180">
    <property type="entry name" value="Methylesterase CheB, C-terminal domain"/>
    <property type="match status" value="1"/>
</dbReference>
<dbReference type="HAMAP" id="MF_00099">
    <property type="entry name" value="CheB_chemtxs"/>
    <property type="match status" value="1"/>
</dbReference>
<dbReference type="InterPro" id="IPR008248">
    <property type="entry name" value="CheB-like"/>
</dbReference>
<dbReference type="InterPro" id="IPR035909">
    <property type="entry name" value="CheB_C"/>
</dbReference>
<dbReference type="InterPro" id="IPR011006">
    <property type="entry name" value="CheY-like_superfamily"/>
</dbReference>
<dbReference type="InterPro" id="IPR000673">
    <property type="entry name" value="Sig_transdc_resp-reg_Me-estase"/>
</dbReference>
<dbReference type="InterPro" id="IPR001789">
    <property type="entry name" value="Sig_transdc_resp-reg_receiver"/>
</dbReference>
<dbReference type="PANTHER" id="PTHR42872">
    <property type="entry name" value="PROTEIN-GLUTAMATE METHYLESTERASE/PROTEIN-GLUTAMINE GLUTAMINASE"/>
    <property type="match status" value="1"/>
</dbReference>
<dbReference type="PANTHER" id="PTHR42872:SF6">
    <property type="entry name" value="PROTEIN-GLUTAMATE METHYLESTERASE_PROTEIN-GLUTAMINE GLUTAMINASE"/>
    <property type="match status" value="1"/>
</dbReference>
<dbReference type="Pfam" id="PF01339">
    <property type="entry name" value="CheB_methylest"/>
    <property type="match status" value="1"/>
</dbReference>
<dbReference type="Pfam" id="PF00072">
    <property type="entry name" value="Response_reg"/>
    <property type="match status" value="1"/>
</dbReference>
<dbReference type="PIRSF" id="PIRSF000876">
    <property type="entry name" value="RR_chemtxs_CheB"/>
    <property type="match status" value="1"/>
</dbReference>
<dbReference type="SMART" id="SM00448">
    <property type="entry name" value="REC"/>
    <property type="match status" value="1"/>
</dbReference>
<dbReference type="SUPFAM" id="SSF52172">
    <property type="entry name" value="CheY-like"/>
    <property type="match status" value="1"/>
</dbReference>
<dbReference type="SUPFAM" id="SSF52738">
    <property type="entry name" value="Methylesterase CheB, C-terminal domain"/>
    <property type="match status" value="1"/>
</dbReference>
<dbReference type="PROSITE" id="PS50122">
    <property type="entry name" value="CHEB"/>
    <property type="match status" value="1"/>
</dbReference>
<dbReference type="PROSITE" id="PS50110">
    <property type="entry name" value="RESPONSE_REGULATORY"/>
    <property type="match status" value="1"/>
</dbReference>
<protein>
    <recommendedName>
        <fullName evidence="1">Protein-glutamate methylesterase/protein-glutamine glutaminase 3</fullName>
        <ecNumber evidence="1">3.1.1.61</ecNumber>
        <ecNumber evidence="1">3.5.1.44</ecNumber>
    </recommendedName>
</protein>